<proteinExistence type="inferred from homology"/>
<dbReference type="EC" id="7.2.1.1" evidence="1"/>
<dbReference type="EMBL" id="AE004091">
    <property type="protein sequence ID" value="AAG06382.1"/>
    <property type="molecule type" value="Genomic_DNA"/>
</dbReference>
<dbReference type="PIR" id="C83272">
    <property type="entry name" value="C83272"/>
</dbReference>
<dbReference type="RefSeq" id="NP_251684.1">
    <property type="nucleotide sequence ID" value="NC_002516.2"/>
</dbReference>
<dbReference type="RefSeq" id="WP_003113984.1">
    <property type="nucleotide sequence ID" value="NZ_QZGE01000009.1"/>
</dbReference>
<dbReference type="SMR" id="Q9HZL1"/>
<dbReference type="STRING" id="208964.PA2994"/>
<dbReference type="PaxDb" id="208964-PA2994"/>
<dbReference type="GeneID" id="878840"/>
<dbReference type="KEGG" id="pae:PA2994"/>
<dbReference type="PATRIC" id="fig|208964.12.peg.3142"/>
<dbReference type="PseudoCAP" id="PA2994"/>
<dbReference type="HOGENOM" id="CLU_003827_7_2_6"/>
<dbReference type="InParanoid" id="Q9HZL1"/>
<dbReference type="OrthoDB" id="9806195at2"/>
<dbReference type="PhylomeDB" id="Q9HZL1"/>
<dbReference type="BioCyc" id="PAER208964:G1FZ6-3046-MONOMER"/>
<dbReference type="PHI-base" id="PHI:11246"/>
<dbReference type="PHI-base" id="PHI:8940"/>
<dbReference type="Proteomes" id="UP000002438">
    <property type="component" value="Chromosome"/>
</dbReference>
<dbReference type="GO" id="GO:0005886">
    <property type="term" value="C:plasma membrane"/>
    <property type="evidence" value="ECO:0007669"/>
    <property type="project" value="UniProtKB-SubCell"/>
</dbReference>
<dbReference type="GO" id="GO:0051537">
    <property type="term" value="F:2 iron, 2 sulfur cluster binding"/>
    <property type="evidence" value="ECO:0007669"/>
    <property type="project" value="UniProtKB-KW"/>
</dbReference>
<dbReference type="GO" id="GO:0009055">
    <property type="term" value="F:electron transfer activity"/>
    <property type="evidence" value="ECO:0007669"/>
    <property type="project" value="UniProtKB-UniRule"/>
</dbReference>
<dbReference type="GO" id="GO:0046872">
    <property type="term" value="F:metal ion binding"/>
    <property type="evidence" value="ECO:0007669"/>
    <property type="project" value="UniProtKB-KW"/>
</dbReference>
<dbReference type="GO" id="GO:0016655">
    <property type="term" value="F:oxidoreductase activity, acting on NAD(P)H, quinone or similar compound as acceptor"/>
    <property type="evidence" value="ECO:0007669"/>
    <property type="project" value="InterPro"/>
</dbReference>
<dbReference type="GO" id="GO:0006814">
    <property type="term" value="P:sodium ion transport"/>
    <property type="evidence" value="ECO:0007669"/>
    <property type="project" value="UniProtKB-UniRule"/>
</dbReference>
<dbReference type="CDD" id="cd00207">
    <property type="entry name" value="fer2"/>
    <property type="match status" value="1"/>
</dbReference>
<dbReference type="CDD" id="cd06188">
    <property type="entry name" value="NADH_quinone_reductase"/>
    <property type="match status" value="1"/>
</dbReference>
<dbReference type="FunFam" id="3.40.50.80:FF:000014">
    <property type="entry name" value="Na(+)-translocating NADH-quinone reductase subunit F"/>
    <property type="match status" value="1"/>
</dbReference>
<dbReference type="Gene3D" id="3.10.20.30">
    <property type="match status" value="1"/>
</dbReference>
<dbReference type="Gene3D" id="3.40.50.80">
    <property type="entry name" value="Nucleotide-binding domain of ferredoxin-NADP reductase (FNR) module"/>
    <property type="match status" value="1"/>
</dbReference>
<dbReference type="Gene3D" id="2.40.30.10">
    <property type="entry name" value="Translation factors"/>
    <property type="match status" value="1"/>
</dbReference>
<dbReference type="HAMAP" id="MF_00430">
    <property type="entry name" value="NqrF"/>
    <property type="match status" value="1"/>
</dbReference>
<dbReference type="InterPro" id="IPR036010">
    <property type="entry name" value="2Fe-2S_ferredoxin-like_sf"/>
</dbReference>
<dbReference type="InterPro" id="IPR001041">
    <property type="entry name" value="2Fe-2S_ferredoxin-type"/>
</dbReference>
<dbReference type="InterPro" id="IPR012675">
    <property type="entry name" value="Beta-grasp_dom_sf"/>
</dbReference>
<dbReference type="InterPro" id="IPR008333">
    <property type="entry name" value="Cbr1-like_FAD-bd_dom"/>
</dbReference>
<dbReference type="InterPro" id="IPR017927">
    <property type="entry name" value="FAD-bd_FR_type"/>
</dbReference>
<dbReference type="InterPro" id="IPR039261">
    <property type="entry name" value="FNR_nucleotide-bd"/>
</dbReference>
<dbReference type="InterPro" id="IPR010205">
    <property type="entry name" value="NqrF"/>
</dbReference>
<dbReference type="InterPro" id="IPR001433">
    <property type="entry name" value="OxRdtase_FAD/NAD-bd"/>
</dbReference>
<dbReference type="InterPro" id="IPR017938">
    <property type="entry name" value="Riboflavin_synthase-like_b-brl"/>
</dbReference>
<dbReference type="NCBIfam" id="TIGR01941">
    <property type="entry name" value="nqrF"/>
    <property type="match status" value="1"/>
</dbReference>
<dbReference type="PANTHER" id="PTHR43644">
    <property type="entry name" value="NA(+)-TRANSLOCATING NADH-QUINONE REDUCTASE SUBUNIT"/>
    <property type="match status" value="1"/>
</dbReference>
<dbReference type="PANTHER" id="PTHR43644:SF1">
    <property type="entry name" value="NAD(P)H-FLAVIN REDUCTASE"/>
    <property type="match status" value="1"/>
</dbReference>
<dbReference type="Pfam" id="PF00970">
    <property type="entry name" value="FAD_binding_6"/>
    <property type="match status" value="1"/>
</dbReference>
<dbReference type="Pfam" id="PF00111">
    <property type="entry name" value="Fer2"/>
    <property type="match status" value="1"/>
</dbReference>
<dbReference type="Pfam" id="PF00175">
    <property type="entry name" value="NAD_binding_1"/>
    <property type="match status" value="1"/>
</dbReference>
<dbReference type="PIRSF" id="PIRSF000044">
    <property type="entry name" value="Cis_Diol_DH_RD"/>
    <property type="match status" value="1"/>
</dbReference>
<dbReference type="SUPFAM" id="SSF54292">
    <property type="entry name" value="2Fe-2S ferredoxin-like"/>
    <property type="match status" value="1"/>
</dbReference>
<dbReference type="SUPFAM" id="SSF52343">
    <property type="entry name" value="Ferredoxin reductase-like, C-terminal NADP-linked domain"/>
    <property type="match status" value="1"/>
</dbReference>
<dbReference type="SUPFAM" id="SSF63380">
    <property type="entry name" value="Riboflavin synthase domain-like"/>
    <property type="match status" value="1"/>
</dbReference>
<dbReference type="PROSITE" id="PS51085">
    <property type="entry name" value="2FE2S_FER_2"/>
    <property type="match status" value="1"/>
</dbReference>
<dbReference type="PROSITE" id="PS51384">
    <property type="entry name" value="FAD_FR"/>
    <property type="match status" value="1"/>
</dbReference>
<feature type="chain" id="PRO_0000074501" description="Na(+)-translocating NADH-quinone reductase subunit F">
    <location>
        <begin position="1"/>
        <end position="407"/>
    </location>
</feature>
<feature type="transmembrane region" description="Helical" evidence="1">
    <location>
        <begin position="6"/>
        <end position="26"/>
    </location>
</feature>
<feature type="domain" description="2Fe-2S ferredoxin-type" evidence="1">
    <location>
        <begin position="35"/>
        <end position="127"/>
    </location>
</feature>
<feature type="domain" description="FAD-binding FR-type" evidence="1">
    <location>
        <begin position="130"/>
        <end position="269"/>
    </location>
</feature>
<feature type="region of interest" description="Catalytic">
    <location>
        <begin position="272"/>
        <end position="389"/>
    </location>
</feature>
<feature type="binding site" evidence="1">
    <location>
        <position position="70"/>
    </location>
    <ligand>
        <name>[2Fe-2S] cluster</name>
        <dbReference type="ChEBI" id="CHEBI:190135"/>
    </ligand>
</feature>
<feature type="binding site" evidence="1">
    <location>
        <position position="76"/>
    </location>
    <ligand>
        <name>[2Fe-2S] cluster</name>
        <dbReference type="ChEBI" id="CHEBI:190135"/>
    </ligand>
</feature>
<feature type="binding site" evidence="1">
    <location>
        <position position="79"/>
    </location>
    <ligand>
        <name>[2Fe-2S] cluster</name>
        <dbReference type="ChEBI" id="CHEBI:190135"/>
    </ligand>
</feature>
<feature type="binding site" evidence="1">
    <location>
        <position position="111"/>
    </location>
    <ligand>
        <name>[2Fe-2S] cluster</name>
        <dbReference type="ChEBI" id="CHEBI:190135"/>
    </ligand>
</feature>
<evidence type="ECO:0000255" key="1">
    <source>
        <dbReference type="HAMAP-Rule" id="MF_00430"/>
    </source>
</evidence>
<sequence>MIGFEIFLAIGMFTAIVLGLVAIILVARAKLVSSGDVTIQINGEHSLTVPAGGKLLQTLAANNVFLSSACGGGGTCAQCKCVVVEGGGEMLPTEESHFTRRQAKEGWRLSCQTPVKQDMQIRVPEEVFGVKKWECTVESNPNVATFIKELTLRLPDGESVDFRAGGYVQLECPPHVVEYKDFDIQPEYRGDWDKFNMWRYVSKVDETVIRAYSMANYPEEKGVVKFNIRIASPPPGSDLPPGQMSSWVFNLKPGDKVTVYGPFGEFFAKDTEAEMVFIGGGAGMAPMRSHIFDQLRRLKSNRKISFWYGARSLREAFYTEEYDQLQAENPNFQWHLALSDPQPEDNWTGLTGFIHNVLFENYLKDHPAPEDCEFYMCGPPMMNAAVIKMLTDLGVERENILLDDFGG</sequence>
<comment type="function">
    <text evidence="1">NQR complex catalyzes the reduction of ubiquinone-1 to ubiquinol by two successive reactions, coupled with the transport of Na(+) ions from the cytoplasm to the periplasm. The first step is catalyzed by NqrF, which accepts electrons from NADH and reduces ubiquinone-1 to ubisemiquinone by a one-electron transfer pathway.</text>
</comment>
<comment type="catalytic activity">
    <reaction evidence="1">
        <text>a ubiquinone + n Na(+)(in) + NADH + H(+) = a ubiquinol + n Na(+)(out) + NAD(+)</text>
        <dbReference type="Rhea" id="RHEA:47748"/>
        <dbReference type="Rhea" id="RHEA-COMP:9565"/>
        <dbReference type="Rhea" id="RHEA-COMP:9566"/>
        <dbReference type="ChEBI" id="CHEBI:15378"/>
        <dbReference type="ChEBI" id="CHEBI:16389"/>
        <dbReference type="ChEBI" id="CHEBI:17976"/>
        <dbReference type="ChEBI" id="CHEBI:29101"/>
        <dbReference type="ChEBI" id="CHEBI:57540"/>
        <dbReference type="ChEBI" id="CHEBI:57945"/>
        <dbReference type="EC" id="7.2.1.1"/>
    </reaction>
</comment>
<comment type="cofactor">
    <cofactor evidence="1">
        <name>[2Fe-2S] cluster</name>
        <dbReference type="ChEBI" id="CHEBI:190135"/>
    </cofactor>
    <text evidence="1">Binds 1 [2Fe-2S] cluster.</text>
</comment>
<comment type="cofactor">
    <cofactor evidence="1">
        <name>FAD</name>
        <dbReference type="ChEBI" id="CHEBI:57692"/>
    </cofactor>
</comment>
<comment type="subunit">
    <text evidence="1">Composed of six subunits; NqrA, NqrB, NqrC, NqrD, NqrE and NqrF.</text>
</comment>
<comment type="subcellular location">
    <subcellularLocation>
        <location evidence="1">Cell inner membrane</location>
        <topology evidence="1">Single-pass membrane protein</topology>
    </subcellularLocation>
</comment>
<comment type="similarity">
    <text evidence="1">Belongs to the NqrF family.</text>
</comment>
<accession>Q9HZL1</accession>
<gene>
    <name evidence="1" type="primary">nqrF</name>
    <name type="ordered locus">PA2994</name>
</gene>
<organism>
    <name type="scientific">Pseudomonas aeruginosa (strain ATCC 15692 / DSM 22644 / CIP 104116 / JCM 14847 / LMG 12228 / 1C / PRS 101 / PAO1)</name>
    <dbReference type="NCBI Taxonomy" id="208964"/>
    <lineage>
        <taxon>Bacteria</taxon>
        <taxon>Pseudomonadati</taxon>
        <taxon>Pseudomonadota</taxon>
        <taxon>Gammaproteobacteria</taxon>
        <taxon>Pseudomonadales</taxon>
        <taxon>Pseudomonadaceae</taxon>
        <taxon>Pseudomonas</taxon>
    </lineage>
</organism>
<reference key="1">
    <citation type="journal article" date="2000" name="Nature">
        <title>Complete genome sequence of Pseudomonas aeruginosa PAO1, an opportunistic pathogen.</title>
        <authorList>
            <person name="Stover C.K."/>
            <person name="Pham X.-Q.T."/>
            <person name="Erwin A.L."/>
            <person name="Mizoguchi S.D."/>
            <person name="Warrener P."/>
            <person name="Hickey M.J."/>
            <person name="Brinkman F.S.L."/>
            <person name="Hufnagle W.O."/>
            <person name="Kowalik D.J."/>
            <person name="Lagrou M."/>
            <person name="Garber R.L."/>
            <person name="Goltry L."/>
            <person name="Tolentino E."/>
            <person name="Westbrock-Wadman S."/>
            <person name="Yuan Y."/>
            <person name="Brody L.L."/>
            <person name="Coulter S.N."/>
            <person name="Folger K.R."/>
            <person name="Kas A."/>
            <person name="Larbig K."/>
            <person name="Lim R.M."/>
            <person name="Smith K.A."/>
            <person name="Spencer D.H."/>
            <person name="Wong G.K.-S."/>
            <person name="Wu Z."/>
            <person name="Paulsen I.T."/>
            <person name="Reizer J."/>
            <person name="Saier M.H. Jr."/>
            <person name="Hancock R.E.W."/>
            <person name="Lory S."/>
            <person name="Olson M.V."/>
        </authorList>
    </citation>
    <scope>NUCLEOTIDE SEQUENCE [LARGE SCALE GENOMIC DNA]</scope>
    <source>
        <strain>ATCC 15692 / DSM 22644 / CIP 104116 / JCM 14847 / LMG 12228 / 1C / PRS 101 / PAO1</strain>
    </source>
</reference>
<keyword id="KW-0001">2Fe-2S</keyword>
<keyword id="KW-0997">Cell inner membrane</keyword>
<keyword id="KW-1003">Cell membrane</keyword>
<keyword id="KW-0274">FAD</keyword>
<keyword id="KW-0285">Flavoprotein</keyword>
<keyword id="KW-0406">Ion transport</keyword>
<keyword id="KW-0408">Iron</keyword>
<keyword id="KW-0411">Iron-sulfur</keyword>
<keyword id="KW-0472">Membrane</keyword>
<keyword id="KW-0479">Metal-binding</keyword>
<keyword id="KW-0520">NAD</keyword>
<keyword id="KW-1185">Reference proteome</keyword>
<keyword id="KW-0915">Sodium</keyword>
<keyword id="KW-0739">Sodium transport</keyword>
<keyword id="KW-1278">Translocase</keyword>
<keyword id="KW-0812">Transmembrane</keyword>
<keyword id="KW-1133">Transmembrane helix</keyword>
<keyword id="KW-0813">Transport</keyword>
<keyword id="KW-0830">Ubiquinone</keyword>
<protein>
    <recommendedName>
        <fullName evidence="1">Na(+)-translocating NADH-quinone reductase subunit F</fullName>
        <shortName evidence="1">Na(+)-NQR subunit F</shortName>
        <shortName evidence="1">Na(+)-translocating NQR subunit F</shortName>
        <ecNumber evidence="1">7.2.1.1</ecNumber>
    </recommendedName>
    <alternativeName>
        <fullName evidence="1">NQR complex subunit F</fullName>
    </alternativeName>
    <alternativeName>
        <fullName evidence="1">NQR-1 subunit F</fullName>
    </alternativeName>
</protein>
<name>NQRF_PSEAE</name>